<reference key="1">
    <citation type="journal article" date="2007" name="Genome Res.">
        <title>Genome characteristics of facultatively symbiotic Frankia sp. strains reflect host range and host plant biogeography.</title>
        <authorList>
            <person name="Normand P."/>
            <person name="Lapierre P."/>
            <person name="Tisa L.S."/>
            <person name="Gogarten J.P."/>
            <person name="Alloisio N."/>
            <person name="Bagnarol E."/>
            <person name="Bassi C.A."/>
            <person name="Berry A.M."/>
            <person name="Bickhart D.M."/>
            <person name="Choisne N."/>
            <person name="Couloux A."/>
            <person name="Cournoyer B."/>
            <person name="Cruveiller S."/>
            <person name="Daubin V."/>
            <person name="Demange N."/>
            <person name="Francino M.P."/>
            <person name="Goltsman E."/>
            <person name="Huang Y."/>
            <person name="Kopp O.R."/>
            <person name="Labarre L."/>
            <person name="Lapidus A."/>
            <person name="Lavire C."/>
            <person name="Marechal J."/>
            <person name="Martinez M."/>
            <person name="Mastronunzio J.E."/>
            <person name="Mullin B.C."/>
            <person name="Niemann J."/>
            <person name="Pujic P."/>
            <person name="Rawnsley T."/>
            <person name="Rouy Z."/>
            <person name="Schenowitz C."/>
            <person name="Sellstedt A."/>
            <person name="Tavares F."/>
            <person name="Tomkins J.P."/>
            <person name="Vallenet D."/>
            <person name="Valverde C."/>
            <person name="Wall L.G."/>
            <person name="Wang Y."/>
            <person name="Medigue C."/>
            <person name="Benson D.R."/>
        </authorList>
    </citation>
    <scope>NUCLEOTIDE SEQUENCE [LARGE SCALE GENOMIC DNA]</scope>
    <source>
        <strain>EAN1pec</strain>
    </source>
</reference>
<dbReference type="EMBL" id="CP000820">
    <property type="protein sequence ID" value="ABW14243.1"/>
    <property type="status" value="ALT_INIT"/>
    <property type="molecule type" value="Genomic_DNA"/>
</dbReference>
<dbReference type="RefSeq" id="WP_041254697.1">
    <property type="nucleotide sequence ID" value="NC_009921.1"/>
</dbReference>
<dbReference type="SMR" id="A8LH53"/>
<dbReference type="STRING" id="298653.Franean1_4878"/>
<dbReference type="KEGG" id="fre:Franean1_4878"/>
<dbReference type="eggNOG" id="COG0638">
    <property type="taxonomic scope" value="Bacteria"/>
</dbReference>
<dbReference type="HOGENOM" id="CLU_071031_0_0_11"/>
<dbReference type="UniPathway" id="UPA00997"/>
<dbReference type="GO" id="GO:0005737">
    <property type="term" value="C:cytoplasm"/>
    <property type="evidence" value="ECO:0007669"/>
    <property type="project" value="UniProtKB-SubCell"/>
</dbReference>
<dbReference type="GO" id="GO:0019773">
    <property type="term" value="C:proteasome core complex, alpha-subunit complex"/>
    <property type="evidence" value="ECO:0007669"/>
    <property type="project" value="UniProtKB-UniRule"/>
</dbReference>
<dbReference type="GO" id="GO:0004298">
    <property type="term" value="F:threonine-type endopeptidase activity"/>
    <property type="evidence" value="ECO:0007669"/>
    <property type="project" value="InterPro"/>
</dbReference>
<dbReference type="GO" id="GO:0019941">
    <property type="term" value="P:modification-dependent protein catabolic process"/>
    <property type="evidence" value="ECO:0007669"/>
    <property type="project" value="UniProtKB-UniRule"/>
</dbReference>
<dbReference type="GO" id="GO:0010498">
    <property type="term" value="P:proteasomal protein catabolic process"/>
    <property type="evidence" value="ECO:0007669"/>
    <property type="project" value="UniProtKB-UniRule"/>
</dbReference>
<dbReference type="CDD" id="cd01906">
    <property type="entry name" value="proteasome_protease_HslV"/>
    <property type="match status" value="1"/>
</dbReference>
<dbReference type="Gene3D" id="3.60.20.10">
    <property type="entry name" value="Glutamine Phosphoribosylpyrophosphate, subunit 1, domain 1"/>
    <property type="match status" value="1"/>
</dbReference>
<dbReference type="HAMAP" id="MF_00289_B">
    <property type="entry name" value="Proteasome_A_B"/>
    <property type="match status" value="1"/>
</dbReference>
<dbReference type="InterPro" id="IPR029055">
    <property type="entry name" value="Ntn_hydrolases_N"/>
</dbReference>
<dbReference type="InterPro" id="IPR050115">
    <property type="entry name" value="Proteasome_alpha"/>
</dbReference>
<dbReference type="InterPro" id="IPR023332">
    <property type="entry name" value="Proteasome_alpha-type"/>
</dbReference>
<dbReference type="InterPro" id="IPR022296">
    <property type="entry name" value="Proteasome_asu_bac"/>
</dbReference>
<dbReference type="InterPro" id="IPR001353">
    <property type="entry name" value="Proteasome_sua/b"/>
</dbReference>
<dbReference type="NCBIfam" id="TIGR03691">
    <property type="entry name" value="20S_bact_alpha"/>
    <property type="match status" value="1"/>
</dbReference>
<dbReference type="PANTHER" id="PTHR11599">
    <property type="entry name" value="PROTEASOME SUBUNIT ALPHA/BETA"/>
    <property type="match status" value="1"/>
</dbReference>
<dbReference type="Pfam" id="PF00227">
    <property type="entry name" value="Proteasome"/>
    <property type="match status" value="1"/>
</dbReference>
<dbReference type="SUPFAM" id="SSF56235">
    <property type="entry name" value="N-terminal nucleophile aminohydrolases (Ntn hydrolases)"/>
    <property type="match status" value="1"/>
</dbReference>
<dbReference type="PROSITE" id="PS51475">
    <property type="entry name" value="PROTEASOME_ALPHA_2"/>
    <property type="match status" value="1"/>
</dbReference>
<evidence type="ECO:0000255" key="1">
    <source>
        <dbReference type="HAMAP-Rule" id="MF_00289"/>
    </source>
</evidence>
<evidence type="ECO:0000305" key="2"/>
<sequence>MTMPFGYASPEQQVRDKSEYARKGIARGRSVVVLTYVDGILFVAENPSTTLHKISEMYDRIGFAAVGKYNEFENLRTAGIRIMDTRGYMYDRRDVTSRALANAYAQTLGAIFTESIKPYEVEIVVAEVGHTAADDQIFRLTYDGSIADERGFIAIGGQSEQVLTSLREHHTEGQPLATALRVAVDALTAGAPPGAQNGERTLTAGNLEVAMLDRKRSRRLFKRIVGSQLDGLLEETAPSAS</sequence>
<proteinExistence type="inferred from homology"/>
<accession>A8LH53</accession>
<protein>
    <recommendedName>
        <fullName evidence="1">Proteasome subunit alpha</fullName>
    </recommendedName>
    <alternativeName>
        <fullName evidence="1">20S proteasome alpha subunit</fullName>
    </alternativeName>
    <alternativeName>
        <fullName evidence="1">Proteasome core protein PrcA</fullName>
    </alternativeName>
</protein>
<keyword id="KW-0963">Cytoplasm</keyword>
<keyword id="KW-0647">Proteasome</keyword>
<comment type="function">
    <text evidence="1">Component of the proteasome core, a large protease complex with broad specificity involved in protein degradation.</text>
</comment>
<comment type="activity regulation">
    <text evidence="1">The formation of the proteasomal ATPase ARC-20S proteasome complex, likely via the docking of the C-termini of ARC into the intersubunit pockets in the alpha-rings, may trigger opening of the gate for substrate entry. Interconversion between the open-gate and close-gate conformations leads to a dynamic regulation of the 20S proteasome proteolysis activity.</text>
</comment>
<comment type="pathway">
    <text evidence="1">Protein degradation; proteasomal Pup-dependent pathway.</text>
</comment>
<comment type="subunit">
    <text evidence="1">The 20S proteasome core is composed of 14 alpha and 14 beta subunits that assemble into four stacked heptameric rings, resulting in a barrel-shaped structure. The two inner rings, each composed of seven catalytic beta subunits, are sandwiched by two outer rings, each composed of seven alpha subunits. The catalytic chamber with the active sites is on the inside of the barrel. Has a gated structure, the ends of the cylinder being occluded by the N-termini of the alpha-subunits. Is capped by the proteasome-associated ATPase, ARC.</text>
</comment>
<comment type="subcellular location">
    <subcellularLocation>
        <location evidence="1">Cytoplasm</location>
    </subcellularLocation>
</comment>
<comment type="similarity">
    <text evidence="1">Belongs to the peptidase T1A family.</text>
</comment>
<comment type="sequence caution" evidence="2">
    <conflict type="erroneous initiation">
        <sequence resource="EMBL-CDS" id="ABW14243"/>
    </conflict>
    <text>Truncated N-terminus.</text>
</comment>
<organism>
    <name type="scientific">Parafrankia sp. (strain EAN1pec)</name>
    <dbReference type="NCBI Taxonomy" id="298653"/>
    <lineage>
        <taxon>Bacteria</taxon>
        <taxon>Bacillati</taxon>
        <taxon>Actinomycetota</taxon>
        <taxon>Actinomycetes</taxon>
        <taxon>Frankiales</taxon>
        <taxon>Frankiaceae</taxon>
        <taxon>Parafrankia</taxon>
    </lineage>
</organism>
<feature type="chain" id="PRO_0000397139" description="Proteasome subunit alpha">
    <location>
        <begin position="1"/>
        <end position="241"/>
    </location>
</feature>
<gene>
    <name evidence="1" type="primary">prcA</name>
    <name type="ordered locus">Franean1_4878</name>
</gene>
<name>PSA_PARS2</name>